<evidence type="ECO:0000255" key="1">
    <source>
        <dbReference type="HAMAP-Rule" id="MF_00115"/>
    </source>
</evidence>
<reference key="1">
    <citation type="journal article" date="2006" name="Appl. Environ. Microbiol.">
        <title>Genome sequence of the chemolithoautotrophic nitrite-oxidizing bacterium Nitrobacter winogradskyi Nb-255.</title>
        <authorList>
            <person name="Starkenburg S.R."/>
            <person name="Chain P.S.G."/>
            <person name="Sayavedra-Soto L.A."/>
            <person name="Hauser L."/>
            <person name="Land M.L."/>
            <person name="Larimer F.W."/>
            <person name="Malfatti S.A."/>
            <person name="Klotz M.G."/>
            <person name="Bottomley P.J."/>
            <person name="Arp D.J."/>
            <person name="Hickey W.J."/>
        </authorList>
    </citation>
    <scope>NUCLEOTIDE SEQUENCE [LARGE SCALE GENOMIC DNA]</scope>
    <source>
        <strain>ATCC 25391 / DSM 10237 / CIP 104748 / NCIMB 11846 / Nb-255</strain>
    </source>
</reference>
<organism>
    <name type="scientific">Nitrobacter winogradskyi (strain ATCC 25391 / DSM 10237 / CIP 104748 / NCIMB 11846 / Nb-255)</name>
    <dbReference type="NCBI Taxonomy" id="323098"/>
    <lineage>
        <taxon>Bacteria</taxon>
        <taxon>Pseudomonadati</taxon>
        <taxon>Pseudomonadota</taxon>
        <taxon>Alphaproteobacteria</taxon>
        <taxon>Hyphomicrobiales</taxon>
        <taxon>Nitrobacteraceae</taxon>
        <taxon>Nitrobacter</taxon>
    </lineage>
</organism>
<accession>Q3SRA3</accession>
<proteinExistence type="inferred from homology"/>
<keyword id="KW-0997">Cell inner membrane</keyword>
<keyword id="KW-1003">Cell membrane</keyword>
<keyword id="KW-0407">Ion channel</keyword>
<keyword id="KW-0406">Ion transport</keyword>
<keyword id="KW-0472">Membrane</keyword>
<keyword id="KW-1185">Reference proteome</keyword>
<keyword id="KW-0812">Transmembrane</keyword>
<keyword id="KW-1133">Transmembrane helix</keyword>
<keyword id="KW-0813">Transport</keyword>
<gene>
    <name evidence="1" type="primary">mscL</name>
    <name type="ordered locus">Nwi_1928</name>
</gene>
<sequence length="139" mass="15106">MWKEFREFAMKGNVVDLAVGVIIGAAFGGIVSSMVADIIMPIVGAVTGGLDFSNYFLPLSESVNASNLSDAKKQGAVLAWGNFLTLTLNFLIVAFVLFMVIKGMNRLKRKDEAASAEPPKPTREEELLTEIRDLLKAKV</sequence>
<name>MSCL_NITWN</name>
<comment type="function">
    <text evidence="1">Channel that opens in response to stretch forces in the membrane lipid bilayer. May participate in the regulation of osmotic pressure changes within the cell.</text>
</comment>
<comment type="subunit">
    <text evidence="1">Homopentamer.</text>
</comment>
<comment type="subcellular location">
    <subcellularLocation>
        <location evidence="1">Cell inner membrane</location>
        <topology evidence="1">Multi-pass membrane protein</topology>
    </subcellularLocation>
</comment>
<comment type="similarity">
    <text evidence="1">Belongs to the MscL family.</text>
</comment>
<dbReference type="EMBL" id="CP000115">
    <property type="protein sequence ID" value="ABA05188.1"/>
    <property type="molecule type" value="Genomic_DNA"/>
</dbReference>
<dbReference type="RefSeq" id="WP_011315184.1">
    <property type="nucleotide sequence ID" value="NC_007406.1"/>
</dbReference>
<dbReference type="STRING" id="323098.Nwi_1928"/>
<dbReference type="KEGG" id="nwi:Nwi_1928"/>
<dbReference type="eggNOG" id="COG1970">
    <property type="taxonomic scope" value="Bacteria"/>
</dbReference>
<dbReference type="HOGENOM" id="CLU_095787_0_1_5"/>
<dbReference type="OrthoDB" id="9810350at2"/>
<dbReference type="Proteomes" id="UP000002531">
    <property type="component" value="Chromosome"/>
</dbReference>
<dbReference type="GO" id="GO:0005886">
    <property type="term" value="C:plasma membrane"/>
    <property type="evidence" value="ECO:0007669"/>
    <property type="project" value="UniProtKB-SubCell"/>
</dbReference>
<dbReference type="GO" id="GO:0008381">
    <property type="term" value="F:mechanosensitive monoatomic ion channel activity"/>
    <property type="evidence" value="ECO:0007669"/>
    <property type="project" value="UniProtKB-UniRule"/>
</dbReference>
<dbReference type="FunFam" id="1.10.1200.120:FF:000001">
    <property type="entry name" value="Large-conductance mechanosensitive channel"/>
    <property type="match status" value="1"/>
</dbReference>
<dbReference type="Gene3D" id="1.10.1200.120">
    <property type="entry name" value="Large-conductance mechanosensitive channel, MscL, domain 1"/>
    <property type="match status" value="1"/>
</dbReference>
<dbReference type="HAMAP" id="MF_00115">
    <property type="entry name" value="MscL"/>
    <property type="match status" value="1"/>
</dbReference>
<dbReference type="InterPro" id="IPR019823">
    <property type="entry name" value="Mechanosensitive_channel_CS"/>
</dbReference>
<dbReference type="InterPro" id="IPR001185">
    <property type="entry name" value="MS_channel"/>
</dbReference>
<dbReference type="InterPro" id="IPR037673">
    <property type="entry name" value="MSC/AndL"/>
</dbReference>
<dbReference type="InterPro" id="IPR036019">
    <property type="entry name" value="MscL_channel"/>
</dbReference>
<dbReference type="NCBIfam" id="TIGR00220">
    <property type="entry name" value="mscL"/>
    <property type="match status" value="1"/>
</dbReference>
<dbReference type="NCBIfam" id="NF001843">
    <property type="entry name" value="PRK00567.1-4"/>
    <property type="match status" value="1"/>
</dbReference>
<dbReference type="NCBIfam" id="NF010557">
    <property type="entry name" value="PRK13952.1"/>
    <property type="match status" value="1"/>
</dbReference>
<dbReference type="PANTHER" id="PTHR30266:SF2">
    <property type="entry name" value="LARGE-CONDUCTANCE MECHANOSENSITIVE CHANNEL"/>
    <property type="match status" value="1"/>
</dbReference>
<dbReference type="PANTHER" id="PTHR30266">
    <property type="entry name" value="MECHANOSENSITIVE CHANNEL MSCL"/>
    <property type="match status" value="1"/>
</dbReference>
<dbReference type="Pfam" id="PF01741">
    <property type="entry name" value="MscL"/>
    <property type="match status" value="1"/>
</dbReference>
<dbReference type="PRINTS" id="PR01264">
    <property type="entry name" value="MECHCHANNEL"/>
</dbReference>
<dbReference type="SUPFAM" id="SSF81330">
    <property type="entry name" value="Gated mechanosensitive channel"/>
    <property type="match status" value="1"/>
</dbReference>
<dbReference type="PROSITE" id="PS01327">
    <property type="entry name" value="MSCL"/>
    <property type="match status" value="1"/>
</dbReference>
<protein>
    <recommendedName>
        <fullName evidence="1">Large-conductance mechanosensitive channel</fullName>
    </recommendedName>
</protein>
<feature type="chain" id="PRO_0000238013" description="Large-conductance mechanosensitive channel">
    <location>
        <begin position="1"/>
        <end position="139"/>
    </location>
</feature>
<feature type="transmembrane region" description="Helical" evidence="1">
    <location>
        <begin position="19"/>
        <end position="39"/>
    </location>
</feature>
<feature type="transmembrane region" description="Helical" evidence="1">
    <location>
        <begin position="40"/>
        <end position="60"/>
    </location>
</feature>
<feature type="transmembrane region" description="Helical" evidence="1">
    <location>
        <begin position="81"/>
        <end position="101"/>
    </location>
</feature>